<evidence type="ECO:0000250" key="1"/>
<evidence type="ECO:0000255" key="2">
    <source>
        <dbReference type="HAMAP-Rule" id="MF_03125"/>
    </source>
</evidence>
<accession>C5GA45</accession>
<comment type="function">
    <text evidence="1">Plays an important role in the de novo pathway and in the salvage pathway of purine nucleotide biosynthesis. Catalyzes the first committed step in the biosynthesis of AMP from IMP (By similarity).</text>
</comment>
<comment type="catalytic activity">
    <reaction evidence="2">
        <text>IMP + L-aspartate + GTP = N(6)-(1,2-dicarboxyethyl)-AMP + GDP + phosphate + 2 H(+)</text>
        <dbReference type="Rhea" id="RHEA:15753"/>
        <dbReference type="ChEBI" id="CHEBI:15378"/>
        <dbReference type="ChEBI" id="CHEBI:29991"/>
        <dbReference type="ChEBI" id="CHEBI:37565"/>
        <dbReference type="ChEBI" id="CHEBI:43474"/>
        <dbReference type="ChEBI" id="CHEBI:57567"/>
        <dbReference type="ChEBI" id="CHEBI:58053"/>
        <dbReference type="ChEBI" id="CHEBI:58189"/>
        <dbReference type="EC" id="6.3.4.4"/>
    </reaction>
</comment>
<comment type="cofactor">
    <cofactor evidence="2">
        <name>Mg(2+)</name>
        <dbReference type="ChEBI" id="CHEBI:18420"/>
    </cofactor>
    <text evidence="2">Binds 1 Mg(2+) ion per subunit.</text>
</comment>
<comment type="pathway">
    <text evidence="2">Purine metabolism; AMP biosynthesis via de novo pathway; AMP from IMP: step 1/2.</text>
</comment>
<comment type="subunit">
    <text evidence="2">Homodimer.</text>
</comment>
<comment type="subcellular location">
    <subcellularLocation>
        <location evidence="2">Cytoplasm</location>
    </subcellularLocation>
</comment>
<comment type="similarity">
    <text evidence="2">Belongs to the adenylosuccinate synthetase family.</text>
</comment>
<organism>
    <name type="scientific">Ajellomyces dermatitidis (strain ER-3 / ATCC MYA-2586)</name>
    <name type="common">Blastomyces dermatitidis</name>
    <dbReference type="NCBI Taxonomy" id="559297"/>
    <lineage>
        <taxon>Eukaryota</taxon>
        <taxon>Fungi</taxon>
        <taxon>Dikarya</taxon>
        <taxon>Ascomycota</taxon>
        <taxon>Pezizomycotina</taxon>
        <taxon>Eurotiomycetes</taxon>
        <taxon>Eurotiomycetidae</taxon>
        <taxon>Onygenales</taxon>
        <taxon>Ajellomycetaceae</taxon>
        <taxon>Blastomyces</taxon>
    </lineage>
</organism>
<keyword id="KW-0963">Cytoplasm</keyword>
<keyword id="KW-0342">GTP-binding</keyword>
<keyword id="KW-0436">Ligase</keyword>
<keyword id="KW-0460">Magnesium</keyword>
<keyword id="KW-0479">Metal-binding</keyword>
<keyword id="KW-0547">Nucleotide-binding</keyword>
<keyword id="KW-0658">Purine biosynthesis</keyword>
<feature type="chain" id="PRO_0000399316" description="Adenylosuccinate synthetase">
    <location>
        <begin position="1"/>
        <end position="422"/>
    </location>
</feature>
<feature type="active site" description="Proton acceptor" evidence="2">
    <location>
        <position position="12"/>
    </location>
</feature>
<feature type="active site" description="Proton donor" evidence="2">
    <location>
        <position position="40"/>
    </location>
</feature>
<feature type="binding site" evidence="2">
    <location>
        <begin position="11"/>
        <end position="17"/>
    </location>
    <ligand>
        <name>GTP</name>
        <dbReference type="ChEBI" id="CHEBI:37565"/>
    </ligand>
</feature>
<feature type="binding site" description="in other chain" evidence="2">
    <location>
        <begin position="12"/>
        <end position="15"/>
    </location>
    <ligand>
        <name>IMP</name>
        <dbReference type="ChEBI" id="CHEBI:58053"/>
        <note>ligand shared between dimeric partners</note>
    </ligand>
</feature>
<feature type="binding site" evidence="2">
    <location>
        <position position="12"/>
    </location>
    <ligand>
        <name>Mg(2+)</name>
        <dbReference type="ChEBI" id="CHEBI:18420"/>
    </ligand>
</feature>
<feature type="binding site" description="in other chain" evidence="2">
    <location>
        <begin position="37"/>
        <end position="40"/>
    </location>
    <ligand>
        <name>IMP</name>
        <dbReference type="ChEBI" id="CHEBI:58053"/>
        <note>ligand shared between dimeric partners</note>
    </ligand>
</feature>
<feature type="binding site" evidence="2">
    <location>
        <begin position="39"/>
        <end position="41"/>
    </location>
    <ligand>
        <name>GTP</name>
        <dbReference type="ChEBI" id="CHEBI:37565"/>
    </ligand>
</feature>
<feature type="binding site" evidence="2">
    <location>
        <position position="39"/>
    </location>
    <ligand>
        <name>Mg(2+)</name>
        <dbReference type="ChEBI" id="CHEBI:18420"/>
    </ligand>
</feature>
<feature type="binding site" description="in other chain" evidence="2">
    <location>
        <position position="129"/>
    </location>
    <ligand>
        <name>IMP</name>
        <dbReference type="ChEBI" id="CHEBI:58053"/>
        <note>ligand shared between dimeric partners</note>
    </ligand>
</feature>
<feature type="binding site" evidence="2">
    <location>
        <position position="143"/>
    </location>
    <ligand>
        <name>IMP</name>
        <dbReference type="ChEBI" id="CHEBI:58053"/>
        <note>ligand shared between dimeric partners</note>
    </ligand>
</feature>
<feature type="binding site" description="in other chain" evidence="2">
    <location>
        <position position="219"/>
    </location>
    <ligand>
        <name>IMP</name>
        <dbReference type="ChEBI" id="CHEBI:58053"/>
        <note>ligand shared between dimeric partners</note>
    </ligand>
</feature>
<feature type="binding site" description="in other chain" evidence="2">
    <location>
        <position position="234"/>
    </location>
    <ligand>
        <name>IMP</name>
        <dbReference type="ChEBI" id="CHEBI:58053"/>
        <note>ligand shared between dimeric partners</note>
    </ligand>
</feature>
<feature type="binding site" evidence="2">
    <location>
        <begin position="294"/>
        <end position="300"/>
    </location>
    <ligand>
        <name>substrate</name>
    </ligand>
</feature>
<feature type="binding site" description="in other chain" evidence="2">
    <location>
        <position position="298"/>
    </location>
    <ligand>
        <name>IMP</name>
        <dbReference type="ChEBI" id="CHEBI:58053"/>
        <note>ligand shared between dimeric partners</note>
    </ligand>
</feature>
<feature type="binding site" evidence="2">
    <location>
        <position position="300"/>
    </location>
    <ligand>
        <name>GTP</name>
        <dbReference type="ChEBI" id="CHEBI:37565"/>
    </ligand>
</feature>
<feature type="binding site" evidence="2">
    <location>
        <begin position="326"/>
        <end position="328"/>
    </location>
    <ligand>
        <name>GTP</name>
        <dbReference type="ChEBI" id="CHEBI:37565"/>
    </ligand>
</feature>
<feature type="binding site" evidence="2">
    <location>
        <begin position="409"/>
        <end position="411"/>
    </location>
    <ligand>
        <name>GTP</name>
        <dbReference type="ChEBI" id="CHEBI:37565"/>
    </ligand>
</feature>
<proteinExistence type="inferred from homology"/>
<gene>
    <name type="ORF">BDCG_00972</name>
</gene>
<dbReference type="EC" id="6.3.4.4" evidence="2"/>
<dbReference type="EMBL" id="EQ999973">
    <property type="protein sequence ID" value="EEQ84167.1"/>
    <property type="molecule type" value="Genomic_DNA"/>
</dbReference>
<dbReference type="RefSeq" id="XP_045272204.1">
    <property type="nucleotide sequence ID" value="XM_045416493.1"/>
</dbReference>
<dbReference type="SMR" id="C5GA45"/>
<dbReference type="STRING" id="559297.C5GA45"/>
<dbReference type="GeneID" id="69023651"/>
<dbReference type="VEuPathDB" id="FungiDB:BDCG_00972"/>
<dbReference type="eggNOG" id="KOG1355">
    <property type="taxonomic scope" value="Eukaryota"/>
</dbReference>
<dbReference type="HOGENOM" id="CLU_029848_3_2_1"/>
<dbReference type="OMA" id="FHHAKPI"/>
<dbReference type="UniPathway" id="UPA00075">
    <property type="reaction ID" value="UER00335"/>
</dbReference>
<dbReference type="GO" id="GO:0005737">
    <property type="term" value="C:cytoplasm"/>
    <property type="evidence" value="ECO:0007669"/>
    <property type="project" value="UniProtKB-SubCell"/>
</dbReference>
<dbReference type="GO" id="GO:0004019">
    <property type="term" value="F:adenylosuccinate synthase activity"/>
    <property type="evidence" value="ECO:0007669"/>
    <property type="project" value="UniProtKB-UniRule"/>
</dbReference>
<dbReference type="GO" id="GO:0016208">
    <property type="term" value="F:AMP binding"/>
    <property type="evidence" value="ECO:0007669"/>
    <property type="project" value="EnsemblFungi"/>
</dbReference>
<dbReference type="GO" id="GO:0019002">
    <property type="term" value="F:GMP binding"/>
    <property type="evidence" value="ECO:0007669"/>
    <property type="project" value="EnsemblFungi"/>
</dbReference>
<dbReference type="GO" id="GO:0005525">
    <property type="term" value="F:GTP binding"/>
    <property type="evidence" value="ECO:0007669"/>
    <property type="project" value="UniProtKB-UniRule"/>
</dbReference>
<dbReference type="GO" id="GO:0000287">
    <property type="term" value="F:magnesium ion binding"/>
    <property type="evidence" value="ECO:0007669"/>
    <property type="project" value="UniProtKB-UniRule"/>
</dbReference>
<dbReference type="GO" id="GO:0044208">
    <property type="term" value="P:'de novo' AMP biosynthetic process"/>
    <property type="evidence" value="ECO:0007669"/>
    <property type="project" value="UniProtKB-UniRule"/>
</dbReference>
<dbReference type="GO" id="GO:0071276">
    <property type="term" value="P:cellular response to cadmium ion"/>
    <property type="evidence" value="ECO:0007669"/>
    <property type="project" value="EnsemblFungi"/>
</dbReference>
<dbReference type="GO" id="GO:0046040">
    <property type="term" value="P:IMP metabolic process"/>
    <property type="evidence" value="ECO:0007669"/>
    <property type="project" value="TreeGrafter"/>
</dbReference>
<dbReference type="CDD" id="cd03108">
    <property type="entry name" value="AdSS"/>
    <property type="match status" value="1"/>
</dbReference>
<dbReference type="FunFam" id="1.10.300.10:FF:000001">
    <property type="entry name" value="Adenylosuccinate synthetase"/>
    <property type="match status" value="1"/>
</dbReference>
<dbReference type="FunFam" id="3.90.170.10:FF:000001">
    <property type="entry name" value="Adenylosuccinate synthetase"/>
    <property type="match status" value="1"/>
</dbReference>
<dbReference type="Gene3D" id="3.40.440.10">
    <property type="entry name" value="Adenylosuccinate Synthetase, subunit A, domain 1"/>
    <property type="match status" value="1"/>
</dbReference>
<dbReference type="Gene3D" id="1.10.300.10">
    <property type="entry name" value="Adenylosuccinate Synthetase, subunit A, domain 2"/>
    <property type="match status" value="1"/>
</dbReference>
<dbReference type="Gene3D" id="3.90.170.10">
    <property type="entry name" value="Adenylosuccinate Synthetase, subunit A, domain 3"/>
    <property type="match status" value="1"/>
</dbReference>
<dbReference type="HAMAP" id="MF_00011">
    <property type="entry name" value="Adenylosucc_synth"/>
    <property type="match status" value="1"/>
</dbReference>
<dbReference type="InterPro" id="IPR018220">
    <property type="entry name" value="Adenylosuccin_syn_GTP-bd"/>
</dbReference>
<dbReference type="InterPro" id="IPR033128">
    <property type="entry name" value="Adenylosuccin_syn_Lys_AS"/>
</dbReference>
<dbReference type="InterPro" id="IPR042109">
    <property type="entry name" value="Adenylosuccinate_synth_dom1"/>
</dbReference>
<dbReference type="InterPro" id="IPR042110">
    <property type="entry name" value="Adenylosuccinate_synth_dom2"/>
</dbReference>
<dbReference type="InterPro" id="IPR042111">
    <property type="entry name" value="Adenylosuccinate_synth_dom3"/>
</dbReference>
<dbReference type="InterPro" id="IPR001114">
    <property type="entry name" value="Adenylosuccinate_synthetase"/>
</dbReference>
<dbReference type="InterPro" id="IPR027417">
    <property type="entry name" value="P-loop_NTPase"/>
</dbReference>
<dbReference type="NCBIfam" id="NF002223">
    <property type="entry name" value="PRK01117.1"/>
    <property type="match status" value="1"/>
</dbReference>
<dbReference type="NCBIfam" id="TIGR00184">
    <property type="entry name" value="purA"/>
    <property type="match status" value="1"/>
</dbReference>
<dbReference type="PANTHER" id="PTHR11846">
    <property type="entry name" value="ADENYLOSUCCINATE SYNTHETASE"/>
    <property type="match status" value="1"/>
</dbReference>
<dbReference type="PANTHER" id="PTHR11846:SF0">
    <property type="entry name" value="ADENYLOSUCCINATE SYNTHETASE"/>
    <property type="match status" value="1"/>
</dbReference>
<dbReference type="Pfam" id="PF00709">
    <property type="entry name" value="Adenylsucc_synt"/>
    <property type="match status" value="1"/>
</dbReference>
<dbReference type="SMART" id="SM00788">
    <property type="entry name" value="Adenylsucc_synt"/>
    <property type="match status" value="1"/>
</dbReference>
<dbReference type="SUPFAM" id="SSF52540">
    <property type="entry name" value="P-loop containing nucleoside triphosphate hydrolases"/>
    <property type="match status" value="1"/>
</dbReference>
<dbReference type="PROSITE" id="PS01266">
    <property type="entry name" value="ADENYLOSUCCIN_SYN_1"/>
    <property type="match status" value="1"/>
</dbReference>
<dbReference type="PROSITE" id="PS00513">
    <property type="entry name" value="ADENYLOSUCCIN_SYN_2"/>
    <property type="match status" value="1"/>
</dbReference>
<reference key="1">
    <citation type="journal article" date="2015" name="PLoS Genet.">
        <title>The dynamic genome and transcriptome of the human fungal pathogen Blastomyces and close relative Emmonsia.</title>
        <authorList>
            <person name="Munoz J.F."/>
            <person name="Gauthier G.M."/>
            <person name="Desjardins C.A."/>
            <person name="Gallo J.E."/>
            <person name="Holder J."/>
            <person name="Sullivan T.D."/>
            <person name="Marty A.J."/>
            <person name="Carmen J.C."/>
            <person name="Chen Z."/>
            <person name="Ding L."/>
            <person name="Gujja S."/>
            <person name="Magrini V."/>
            <person name="Misas E."/>
            <person name="Mitreva M."/>
            <person name="Priest M."/>
            <person name="Saif S."/>
            <person name="Whiston E.A."/>
            <person name="Young S."/>
            <person name="Zeng Q."/>
            <person name="Goldman W.E."/>
            <person name="Mardis E.R."/>
            <person name="Taylor J.W."/>
            <person name="McEwen J.G."/>
            <person name="Clay O.K."/>
            <person name="Klein B.S."/>
            <person name="Cuomo C.A."/>
        </authorList>
    </citation>
    <scope>NUCLEOTIDE SEQUENCE [LARGE SCALE GENOMIC DNA]</scope>
    <source>
        <strain>ER-3 / ATCC MYA-2586</strain>
    </source>
</reference>
<protein>
    <recommendedName>
        <fullName evidence="2">Adenylosuccinate synthetase</fullName>
        <shortName evidence="2">AMPSase</shortName>
        <shortName evidence="2">AdSS</shortName>
        <ecNumber evidence="2">6.3.4.4</ecNumber>
    </recommendedName>
    <alternativeName>
        <fullName evidence="2">IMP--aspartate ligase</fullName>
    </alternativeName>
</protein>
<name>PURA_AJEDR</name>
<sequence length="422" mass="46693">MVTIVLGAQFGDEGKGKITDLLSQSATLCCRAAGGHNAGHTIVHDNITYDFHILPSGLISPDCVNLIGSGTVVHVPSFFKELDALKAKGLKEADKRIFISDRAHVCFDLHSVVDGLEEADLAGKKVGTTGKGIGPCYSDKASRRGVRIGEVLEEGVAEDKLRSLEAGYRRRFGELQYDLEDEVKRFNEYRTKLQPYVVDQMAFLEKYRSCPSVLVEGANALMLDIDHGTYPYVTSSCTGLGGAIQGLTLNPTSIKSIVGVVKAYTTRVGSGPFPTEQINDIGEKLQSVGREFGVTTGRRRRCGWLDMVMCRYSNAINHYTTINLTKLDILDDFDEIKVAVAYKLDGRRLESFPAQLEVLDKVEVEYVTFPGWKSNTMGVTRWEDLPVNARRYVQFIEQEMGGVPIKWIGTGPARTHMIEREV</sequence>